<name>SPT16_YARLI</name>
<keyword id="KW-0158">Chromosome</keyword>
<keyword id="KW-0175">Coiled coil</keyword>
<keyword id="KW-0227">DNA damage</keyword>
<keyword id="KW-0234">DNA repair</keyword>
<keyword id="KW-0235">DNA replication</keyword>
<keyword id="KW-0539">Nucleus</keyword>
<keyword id="KW-1185">Reference proteome</keyword>
<keyword id="KW-0804">Transcription</keyword>
<keyword id="KW-0805">Transcription regulation</keyword>
<dbReference type="EMBL" id="CR382130">
    <property type="protein sequence ID" value="CAG81019.1"/>
    <property type="molecule type" value="Genomic_DNA"/>
</dbReference>
<dbReference type="RefSeq" id="XP_502831.1">
    <property type="nucleotide sequence ID" value="XM_502831.1"/>
</dbReference>
<dbReference type="SMR" id="Q6C931"/>
<dbReference type="FunCoup" id="Q6C931">
    <property type="interactions" value="1385"/>
</dbReference>
<dbReference type="STRING" id="284591.Q6C931"/>
<dbReference type="EnsemblFungi" id="CAG81019">
    <property type="protein sequence ID" value="CAG81019"/>
    <property type="gene ID" value="YALI0_D14652g"/>
</dbReference>
<dbReference type="KEGG" id="yli:2911323"/>
<dbReference type="VEuPathDB" id="FungiDB:YALI0_D14652g"/>
<dbReference type="HOGENOM" id="CLU_004627_1_0_1"/>
<dbReference type="InParanoid" id="Q6C931"/>
<dbReference type="OMA" id="YHINTIP"/>
<dbReference type="OrthoDB" id="117292at4891"/>
<dbReference type="Proteomes" id="UP000001300">
    <property type="component" value="Chromosome D"/>
</dbReference>
<dbReference type="GO" id="GO:0035101">
    <property type="term" value="C:FACT complex"/>
    <property type="evidence" value="ECO:0000318"/>
    <property type="project" value="GO_Central"/>
</dbReference>
<dbReference type="GO" id="GO:0042393">
    <property type="term" value="F:histone binding"/>
    <property type="evidence" value="ECO:0007669"/>
    <property type="project" value="EnsemblFungi"/>
</dbReference>
<dbReference type="GO" id="GO:0140713">
    <property type="term" value="F:histone chaperone activity"/>
    <property type="evidence" value="ECO:0007669"/>
    <property type="project" value="EnsemblFungi"/>
</dbReference>
<dbReference type="GO" id="GO:0031491">
    <property type="term" value="F:nucleosome binding"/>
    <property type="evidence" value="ECO:0000318"/>
    <property type="project" value="GO_Central"/>
</dbReference>
<dbReference type="GO" id="GO:0140719">
    <property type="term" value="P:constitutive heterochromatin formation"/>
    <property type="evidence" value="ECO:0007669"/>
    <property type="project" value="EnsemblFungi"/>
</dbReference>
<dbReference type="GO" id="GO:0006281">
    <property type="term" value="P:DNA repair"/>
    <property type="evidence" value="ECO:0007669"/>
    <property type="project" value="UniProtKB-KW"/>
</dbReference>
<dbReference type="GO" id="GO:0006261">
    <property type="term" value="P:DNA-templated DNA replication"/>
    <property type="evidence" value="ECO:0007669"/>
    <property type="project" value="EnsemblFungi"/>
</dbReference>
<dbReference type="GO" id="GO:0006334">
    <property type="term" value="P:nucleosome assembly"/>
    <property type="evidence" value="ECO:0007669"/>
    <property type="project" value="EnsemblFungi"/>
</dbReference>
<dbReference type="GO" id="GO:0045899">
    <property type="term" value="P:positive regulation of RNA polymerase II transcription preinitiation complex assembly"/>
    <property type="evidence" value="ECO:0007669"/>
    <property type="project" value="EnsemblFungi"/>
</dbReference>
<dbReference type="GO" id="GO:0007063">
    <property type="term" value="P:regulation of sister chromatid cohesion"/>
    <property type="evidence" value="ECO:0007669"/>
    <property type="project" value="EnsemblFungi"/>
</dbReference>
<dbReference type="GO" id="GO:0006368">
    <property type="term" value="P:transcription elongation by RNA polymerase II"/>
    <property type="evidence" value="ECO:0000318"/>
    <property type="project" value="GO_Central"/>
</dbReference>
<dbReference type="CDD" id="cd01091">
    <property type="entry name" value="CDC68-like"/>
    <property type="match status" value="1"/>
</dbReference>
<dbReference type="FunFam" id="2.30.29.150:FF:000002">
    <property type="entry name" value="FACT complex subunit SPT16"/>
    <property type="match status" value="1"/>
</dbReference>
<dbReference type="FunFam" id="2.30.29.30:FF:000017">
    <property type="entry name" value="FACT complex subunit SPT16"/>
    <property type="match status" value="1"/>
</dbReference>
<dbReference type="FunFam" id="2.30.29.210:FF:000001">
    <property type="entry name" value="FACT complex subunit spt16"/>
    <property type="match status" value="1"/>
</dbReference>
<dbReference type="FunFam" id="3.90.230.10:FF:000005">
    <property type="entry name" value="FACT complex subunit spt16"/>
    <property type="match status" value="1"/>
</dbReference>
<dbReference type="Gene3D" id="2.30.29.150">
    <property type="match status" value="1"/>
</dbReference>
<dbReference type="Gene3D" id="3.90.230.10">
    <property type="entry name" value="Creatinase/methionine aminopeptidase superfamily"/>
    <property type="match status" value="1"/>
</dbReference>
<dbReference type="Gene3D" id="3.40.350.10">
    <property type="entry name" value="Creatinase/prolidase N-terminal domain"/>
    <property type="match status" value="1"/>
</dbReference>
<dbReference type="Gene3D" id="2.30.29.210">
    <property type="entry name" value="FACT complex subunit Spt16p/Cdc68p"/>
    <property type="match status" value="1"/>
</dbReference>
<dbReference type="Gene3D" id="2.30.29.30">
    <property type="entry name" value="Pleckstrin-homology domain (PH domain)/Phosphotyrosine-binding domain (PTB)"/>
    <property type="match status" value="1"/>
</dbReference>
<dbReference type="InterPro" id="IPR029149">
    <property type="entry name" value="Creatin/AminoP/Spt16_N"/>
</dbReference>
<dbReference type="InterPro" id="IPR036005">
    <property type="entry name" value="Creatinase/aminopeptidase-like"/>
</dbReference>
<dbReference type="InterPro" id="IPR029148">
    <property type="entry name" value="FACT-SPT16_Nlobe"/>
</dbReference>
<dbReference type="InterPro" id="IPR056595">
    <property type="entry name" value="Fact-SPT16_PH"/>
</dbReference>
<dbReference type="InterPro" id="IPR048969">
    <property type="entry name" value="FACT_SPT16_C"/>
</dbReference>
<dbReference type="InterPro" id="IPR013953">
    <property type="entry name" value="FACT_SPT16_M"/>
</dbReference>
<dbReference type="InterPro" id="IPR000994">
    <property type="entry name" value="Pept_M24"/>
</dbReference>
<dbReference type="InterPro" id="IPR011993">
    <property type="entry name" value="PH-like_dom_sf"/>
</dbReference>
<dbReference type="InterPro" id="IPR013719">
    <property type="entry name" value="RTT106/SPT16-like_middle_dom"/>
</dbReference>
<dbReference type="InterPro" id="IPR040258">
    <property type="entry name" value="Spt16"/>
</dbReference>
<dbReference type="InterPro" id="IPR033825">
    <property type="entry name" value="Spt16_M24"/>
</dbReference>
<dbReference type="PANTHER" id="PTHR13980">
    <property type="entry name" value="CDC68 RELATED"/>
    <property type="match status" value="1"/>
</dbReference>
<dbReference type="PANTHER" id="PTHR13980:SF15">
    <property type="entry name" value="FACT COMPLEX SUBUNIT SPT16"/>
    <property type="match status" value="1"/>
</dbReference>
<dbReference type="Pfam" id="PF14826">
    <property type="entry name" value="FACT-Spt16_Nlob"/>
    <property type="match status" value="1"/>
</dbReference>
<dbReference type="Pfam" id="PF00557">
    <property type="entry name" value="Peptidase_M24"/>
    <property type="match status" value="1"/>
</dbReference>
<dbReference type="Pfam" id="PF24824">
    <property type="entry name" value="PH_SPT16"/>
    <property type="match status" value="1"/>
</dbReference>
<dbReference type="Pfam" id="PF08512">
    <property type="entry name" value="Rttp106-like_middle"/>
    <property type="match status" value="1"/>
</dbReference>
<dbReference type="Pfam" id="PF08644">
    <property type="entry name" value="SPT16"/>
    <property type="match status" value="1"/>
</dbReference>
<dbReference type="Pfam" id="PF21091">
    <property type="entry name" value="SPT16_C"/>
    <property type="match status" value="1"/>
</dbReference>
<dbReference type="SMART" id="SM01285">
    <property type="entry name" value="FACT-Spt16_Nlob"/>
    <property type="match status" value="1"/>
</dbReference>
<dbReference type="SMART" id="SM01287">
    <property type="entry name" value="Rtt106"/>
    <property type="match status" value="1"/>
</dbReference>
<dbReference type="SMART" id="SM01286">
    <property type="entry name" value="SPT16"/>
    <property type="match status" value="1"/>
</dbReference>
<dbReference type="SUPFAM" id="SSF55920">
    <property type="entry name" value="Creatinase/aminopeptidase"/>
    <property type="match status" value="1"/>
</dbReference>
<organism>
    <name type="scientific">Yarrowia lipolytica (strain CLIB 122 / E 150)</name>
    <name type="common">Yeast</name>
    <name type="synonym">Candida lipolytica</name>
    <dbReference type="NCBI Taxonomy" id="284591"/>
    <lineage>
        <taxon>Eukaryota</taxon>
        <taxon>Fungi</taxon>
        <taxon>Dikarya</taxon>
        <taxon>Ascomycota</taxon>
        <taxon>Saccharomycotina</taxon>
        <taxon>Dipodascomycetes</taxon>
        <taxon>Dipodascales</taxon>
        <taxon>Dipodascales incertae sedis</taxon>
        <taxon>Yarrowia</taxon>
    </lineage>
</organism>
<protein>
    <recommendedName>
        <fullName>FACT complex subunit SPT16</fullName>
    </recommendedName>
    <alternativeName>
        <fullName>Facilitates chromatin transcription complex subunit SPT16</fullName>
    </alternativeName>
</protein>
<comment type="function">
    <text evidence="1">Component of the FACT complex, a general chromatin factor that acts to reorganize nucleosomes. The FACT complex is involved in multiple processes that require DNA as a template such as mRNA elongation, DNA replication and DNA repair. During transcription elongation the FACT complex acts as a histone chaperone that both destabilizes and restores nucleosomal structure. It facilitates the passage of RNA polymerase II and transcription by promoting the dissociation of one histone H2A-H2B dimer from the nucleosome, then subsequently promotes the reestablishment of the nucleosome following the passage of RNA polymerase II (By similarity).</text>
</comment>
<comment type="subunit">
    <text evidence="1">Forms a stable heterodimer with POB3. The SPT16-POB3 dimer weakly associates with multiple molecules of NHP6 to form the FACT complex (By similarity).</text>
</comment>
<comment type="subcellular location">
    <subcellularLocation>
        <location evidence="1">Nucleus</location>
    </subcellularLocation>
    <subcellularLocation>
        <location evidence="1">Chromosome</location>
    </subcellularLocation>
</comment>
<comment type="similarity">
    <text evidence="4">Belongs to the peptidase M24 family. SPT16 subfamily.</text>
</comment>
<comment type="caution">
    <text evidence="4">Although related to the peptidase M24 family, this protein lacks conserved active site residues suggesting that it may lack peptidase activity.</text>
</comment>
<feature type="chain" id="PRO_0000245190" description="FACT complex subunit SPT16">
    <location>
        <begin position="1"/>
        <end position="1003"/>
    </location>
</feature>
<feature type="region of interest" description="Disordered" evidence="3">
    <location>
        <begin position="436"/>
        <end position="486"/>
    </location>
</feature>
<feature type="region of interest" description="Disordered" evidence="3">
    <location>
        <begin position="930"/>
        <end position="1003"/>
    </location>
</feature>
<feature type="coiled-coil region" evidence="2">
    <location>
        <begin position="428"/>
        <end position="460"/>
    </location>
</feature>
<feature type="coiled-coil region" evidence="2">
    <location>
        <begin position="622"/>
        <end position="648"/>
    </location>
</feature>
<feature type="compositionally biased region" description="Basic residues" evidence="3">
    <location>
        <begin position="440"/>
        <end position="450"/>
    </location>
</feature>
<feature type="compositionally biased region" description="Basic and acidic residues" evidence="3">
    <location>
        <begin position="468"/>
        <end position="486"/>
    </location>
</feature>
<feature type="compositionally biased region" description="Acidic residues" evidence="3">
    <location>
        <begin position="933"/>
        <end position="986"/>
    </location>
</feature>
<evidence type="ECO:0000250" key="1"/>
<evidence type="ECO:0000255" key="2"/>
<evidence type="ECO:0000256" key="3">
    <source>
        <dbReference type="SAM" id="MobiDB-lite"/>
    </source>
</evidence>
<evidence type="ECO:0000305" key="4"/>
<reference key="1">
    <citation type="journal article" date="2004" name="Nature">
        <title>Genome evolution in yeasts.</title>
        <authorList>
            <person name="Dujon B."/>
            <person name="Sherman D."/>
            <person name="Fischer G."/>
            <person name="Durrens P."/>
            <person name="Casaregola S."/>
            <person name="Lafontaine I."/>
            <person name="de Montigny J."/>
            <person name="Marck C."/>
            <person name="Neuveglise C."/>
            <person name="Talla E."/>
            <person name="Goffard N."/>
            <person name="Frangeul L."/>
            <person name="Aigle M."/>
            <person name="Anthouard V."/>
            <person name="Babour A."/>
            <person name="Barbe V."/>
            <person name="Barnay S."/>
            <person name="Blanchin S."/>
            <person name="Beckerich J.-M."/>
            <person name="Beyne E."/>
            <person name="Bleykasten C."/>
            <person name="Boisrame A."/>
            <person name="Boyer J."/>
            <person name="Cattolico L."/>
            <person name="Confanioleri F."/>
            <person name="de Daruvar A."/>
            <person name="Despons L."/>
            <person name="Fabre E."/>
            <person name="Fairhead C."/>
            <person name="Ferry-Dumazet H."/>
            <person name="Groppi A."/>
            <person name="Hantraye F."/>
            <person name="Hennequin C."/>
            <person name="Jauniaux N."/>
            <person name="Joyet P."/>
            <person name="Kachouri R."/>
            <person name="Kerrest A."/>
            <person name="Koszul R."/>
            <person name="Lemaire M."/>
            <person name="Lesur I."/>
            <person name="Ma L."/>
            <person name="Muller H."/>
            <person name="Nicaud J.-M."/>
            <person name="Nikolski M."/>
            <person name="Oztas S."/>
            <person name="Ozier-Kalogeropoulos O."/>
            <person name="Pellenz S."/>
            <person name="Potier S."/>
            <person name="Richard G.-F."/>
            <person name="Straub M.-L."/>
            <person name="Suleau A."/>
            <person name="Swennen D."/>
            <person name="Tekaia F."/>
            <person name="Wesolowski-Louvel M."/>
            <person name="Westhof E."/>
            <person name="Wirth B."/>
            <person name="Zeniou-Meyer M."/>
            <person name="Zivanovic Y."/>
            <person name="Bolotin-Fukuhara M."/>
            <person name="Thierry A."/>
            <person name="Bouchier C."/>
            <person name="Caudron B."/>
            <person name="Scarpelli C."/>
            <person name="Gaillardin C."/>
            <person name="Weissenbach J."/>
            <person name="Wincker P."/>
            <person name="Souciet J.-L."/>
        </authorList>
    </citation>
    <scope>NUCLEOTIDE SEQUENCE [LARGE SCALE GENOMIC DNA]</scope>
    <source>
        <strain>CLIB 122 / E 150</strain>
    </source>
</reference>
<accession>Q6C931</accession>
<proteinExistence type="inferred from homology"/>
<sequence>MEVKISESAFNTRVEKLQGALNTHKDAFGGADSVLLLIGKGGDDNPYIKTAVAQNWLLGYEFFSTALLVTPKRVIFVTNSSKAVHLEGLKKDDKVEVWVRPKEGGKEVMEKLAKVAKEAGNKLGVVVKDKFRGPIVDEFEAALKDSGIEKVDIEVGLSHLLEAKDDDEIKSIRVASRASTAYLTKFFTDQMLGIVDEERRLSHSKFSEQIENKLQDEGFFAQNQVKLGSDFHQTNLEWCYMPIIQSGGKYDLRPSAVSDDANLHGGTIVCTLGTRYKGYCSNVGRTFMINPTKAQEQNYEVLVGLREKVFDSIKVGAKACDVYNAAVSYIKSKAPKLEAHLLKTIGWSIGIDFRDAKFLLNAKCQREIVDGSTFDVSLGFQNLTNSAATDPKNKTYSLALVDTVRVTRAGVAVLTDSAPVALSEVTYFFEDDDEDAEKEKKKKEQAKKEKKQQQAAATVSSITRTKLRHEARAEDNNDQKRKDDQKALHEKLNKAGLERFKNTEGALNGEEKVVIKKFESYKRDTQLPQNLLKDLRVHVDTRSQSIILPINGRPVPFHINTYKSGSKTDEGDYVYIRLNLSSPGQIAGSKKDAPQVFEDPDAQFLRSITFRSRHVEHMNDVFKQIQDLKKASTKKEAEKKEMEDVVAQDSLVEVRARRPLKLDAVFVRPAPDGKRVAGTLEIHQNGLRYVSPIRSDHKIDVLFDNIKHLFFQPTEGELIVCIHAHLKNPILIGKKKTWDVQFYREASDMAFDETGNRKRKYRYGDEDELEAEQEERRRRLQLDKEFKAFSEKISEASDRKVDVDTPFRELGFHGVPFRSNVLLQPSADCLVQLIDTPFSVITLGEIELAHLERVQFGLKNFDLVFVYKDFNRPVTHINSIPVDQLDAVKDWLNEVEIPYSEGPVNLNWGSIMKTVVADPQEFFTSGGWSFLDLESDDEDQEEEESEFEVSDDEPEDEDEDSEEFASEDDSEGDFDSEEESGEDWDELEKQAAAEDGEPPRKKR</sequence>
<gene>
    <name type="primary">SPT16</name>
    <name type="ordered locus">YALI0D14652g</name>
</gene>